<name>SPD2_TRICX</name>
<protein>
    <recommendedName>
        <fullName>Spidroin-2</fullName>
    </recommendedName>
    <alternativeName>
        <fullName>Dragline silk fibroin 2</fullName>
    </alternativeName>
</protein>
<accession>P46804</accession>
<proteinExistence type="evidence at transcript level"/>
<dbReference type="EMBL" id="M92913">
    <property type="protein sequence ID" value="AAA29381.1"/>
    <property type="molecule type" value="mRNA"/>
</dbReference>
<dbReference type="PIR" id="A44112">
    <property type="entry name" value="A44112"/>
</dbReference>
<dbReference type="SMR" id="P46804"/>
<dbReference type="GO" id="GO:0005576">
    <property type="term" value="C:extracellular region"/>
    <property type="evidence" value="ECO:0007669"/>
    <property type="project" value="UniProtKB-SubCell"/>
</dbReference>
<dbReference type="Gene3D" id="1.10.10.1350">
    <property type="entry name" value="Spidroin domain, C-terminal domain"/>
    <property type="match status" value="1"/>
</dbReference>
<dbReference type="InterPro" id="IPR021001">
    <property type="entry name" value="Spidroin_C"/>
</dbReference>
<dbReference type="InterPro" id="IPR038542">
    <property type="entry name" value="Spidroin_C_sf"/>
</dbReference>
<dbReference type="Pfam" id="PF11260">
    <property type="entry name" value="Spidroin_MaSp"/>
    <property type="match status" value="1"/>
</dbReference>
<evidence type="ECO:0000256" key="1">
    <source>
        <dbReference type="SAM" id="MobiDB-lite"/>
    </source>
</evidence>
<evidence type="ECO:0000305" key="2"/>
<reference key="1">
    <citation type="journal article" date="1992" name="J. Biol. Chem.">
        <title>Isolation of a clone encoding a second dragline silk fibroin. Nephila clavipes dragline silk is a two-protein fiber.</title>
        <authorList>
            <person name="Hinman M.B."/>
            <person name="Lewis R.V."/>
        </authorList>
    </citation>
    <scope>NUCLEOTIDE SEQUENCE [MRNA]</scope>
</reference>
<comment type="function">
    <text>Spiders' major ampullate silk possesses unique characteristics of strength and elasticity. Fibroin consists of pseudocrystalline regions of antiparallel beta-sheet interspersed with elastic amorphous segments.</text>
</comment>
<comment type="subunit">
    <text>Major subunit, with spidroin 1, of the dragline silk.</text>
</comment>
<comment type="subcellular location">
    <subcellularLocation>
        <location>Secreted</location>
        <location>Extracellular space</location>
    </subcellularLocation>
</comment>
<comment type="domain">
    <text>Highly repetitive protein characterized by regions of polyalanine and glycine-rich repeating units.</text>
</comment>
<comment type="similarity">
    <text evidence="2">Belongs to the silk fibroin family.</text>
</comment>
<comment type="online information" name="Protein Spotlight">
    <link uri="https://www.proteinspotlight.org/back_issues/024"/>
    <text>The tiptoe of an airbus - Issue 24 of July 2002</text>
</comment>
<keyword id="KW-0677">Repeat</keyword>
<keyword id="KW-0964">Secreted</keyword>
<keyword id="KW-0737">Silk protein</keyword>
<sequence>PGGYGPGQQGPGGYGPGQQGPSGPGSAAAAAAAAAAGPGGYGPGQQGPGGYGPGQQGPGRYGPGQQGPSGPGSAAAAAAGSGQQGPGGYGPRQQGPGGYGQGQQGPSGPGSAAAASAAASAESGQQGPGGYGPGQQGPGGYGPGQQGPGGYGPGQQGPSGPGSAAAAAAAASGPGQQGPGGYGPGQQGPGGYGPGQQGPSGPGSAAAAAAAASGPGQQGPGGYGPGQQGPGGYGPGQQGLSGPGSAAAAAAAGPGQQGPGGYGPGQQGPSGPGSAAAAAAAAAGPGGYGPGQQGPGGYGPGQQGPSGAGSAAAAAAAGPGQQGLGGYGPGQQGPGGYGPGQQGPGGYGPGSASAAAAAAGPGQQGPGGYGPGQQGPSGPGSASAAAAAAAAGPGGYGPGQQGPGGYAPGQQGPSGPGSASAAAAAAAAGPGGYGPGQQGPGGYAPGQQGPSGPGSAAAAAAAAAGPGGYGPAQQGPSGPGIAASAASAGPGGYGPAQQGPAGYGPGSAVAASAGAGSAGYGPGSQASAAASRLASPDSGARVASAVSNLVSSGPTSSAALSSVISNAVSQIGASNPGLSGCDVLIQALLEIVSACVTILSSSSIGQVNYGAASQFAQVVGQSVLSAF</sequence>
<organism>
    <name type="scientific">Trichonephila clavipes</name>
    <name type="common">Golden silk orbweaver</name>
    <name type="synonym">Nephila clavipes</name>
    <dbReference type="NCBI Taxonomy" id="2585209"/>
    <lineage>
        <taxon>Eukaryota</taxon>
        <taxon>Metazoa</taxon>
        <taxon>Ecdysozoa</taxon>
        <taxon>Arthropoda</taxon>
        <taxon>Chelicerata</taxon>
        <taxon>Arachnida</taxon>
        <taxon>Araneae</taxon>
        <taxon>Araneomorphae</taxon>
        <taxon>Entelegynae</taxon>
        <taxon>Araneoidea</taxon>
        <taxon>Nephilidae</taxon>
        <taxon>Trichonephila</taxon>
    </lineage>
</organism>
<feature type="chain" id="PRO_0000221447" description="Spidroin-2">
    <location>
        <begin position="1" status="less than"/>
        <end position="627"/>
    </location>
</feature>
<feature type="repeat" description="1">
    <location>
        <begin position="1"/>
        <end position="36"/>
    </location>
</feature>
<feature type="repeat" description="2">
    <location>
        <begin position="37"/>
        <end position="79"/>
    </location>
</feature>
<feature type="repeat" description="3">
    <location>
        <begin position="80"/>
        <end position="121"/>
    </location>
</feature>
<feature type="repeat" description="4">
    <location>
        <begin position="122"/>
        <end position="172"/>
    </location>
</feature>
<feature type="repeat" description="5">
    <location>
        <begin position="173"/>
        <end position="213"/>
    </location>
</feature>
<feature type="repeat" description="6">
    <location>
        <begin position="214"/>
        <end position="252"/>
    </location>
</feature>
<feature type="repeat" description="7">
    <location>
        <begin position="253"/>
        <end position="283"/>
    </location>
</feature>
<feature type="repeat" description="8">
    <location>
        <begin position="284"/>
        <end position="317"/>
    </location>
</feature>
<feature type="repeat" description="9">
    <location>
        <begin position="318"/>
        <end position="359"/>
    </location>
</feature>
<feature type="repeat" description="10">
    <location>
        <begin position="360"/>
        <end position="391"/>
    </location>
</feature>
<feature type="repeat" description="11">
    <location>
        <begin position="392"/>
        <end position="428"/>
    </location>
</feature>
<feature type="repeat" description="12">
    <location>
        <begin position="429"/>
        <end position="464"/>
    </location>
</feature>
<feature type="repeat" description="13">
    <location>
        <begin position="465"/>
        <end position="488"/>
    </location>
</feature>
<feature type="repeat" description="14">
    <location>
        <begin position="489"/>
        <end position="515"/>
    </location>
</feature>
<feature type="repeat" description="15">
    <location>
        <begin position="516"/>
        <end position="530"/>
    </location>
</feature>
<feature type="region of interest" description="15 X approximate tandem repeats">
    <location>
        <begin position="1"/>
        <end position="530"/>
    </location>
</feature>
<feature type="region of interest" description="Disordered" evidence="1">
    <location>
        <begin position="1"/>
        <end position="508"/>
    </location>
</feature>
<feature type="compositionally biased region" description="Gly residues" evidence="1">
    <location>
        <begin position="1"/>
        <end position="23"/>
    </location>
</feature>
<feature type="compositionally biased region" description="Low complexity" evidence="1">
    <location>
        <begin position="24"/>
        <end position="36"/>
    </location>
</feature>
<feature type="compositionally biased region" description="Gly residues" evidence="1">
    <location>
        <begin position="37"/>
        <end position="70"/>
    </location>
</feature>
<feature type="compositionally biased region" description="Low complexity" evidence="1">
    <location>
        <begin position="71"/>
        <end position="81"/>
    </location>
</feature>
<feature type="compositionally biased region" description="Gly residues" evidence="1">
    <location>
        <begin position="82"/>
        <end position="108"/>
    </location>
</feature>
<feature type="compositionally biased region" description="Low complexity" evidence="1">
    <location>
        <begin position="109"/>
        <end position="125"/>
    </location>
</feature>
<feature type="compositionally biased region" description="Gly residues" evidence="1">
    <location>
        <begin position="126"/>
        <end position="160"/>
    </location>
</feature>
<feature type="compositionally biased region" description="Low complexity" evidence="1">
    <location>
        <begin position="161"/>
        <end position="174"/>
    </location>
</feature>
<feature type="compositionally biased region" description="Gly residues" evidence="1">
    <location>
        <begin position="175"/>
        <end position="201"/>
    </location>
</feature>
<feature type="compositionally biased region" description="Low complexity" evidence="1">
    <location>
        <begin position="202"/>
        <end position="215"/>
    </location>
</feature>
<feature type="compositionally biased region" description="Gly residues" evidence="1">
    <location>
        <begin position="216"/>
        <end position="242"/>
    </location>
</feature>
<feature type="compositionally biased region" description="Low complexity" evidence="1">
    <location>
        <begin position="243"/>
        <end position="254"/>
    </location>
</feature>
<feature type="compositionally biased region" description="Gly residues" evidence="1">
    <location>
        <begin position="255"/>
        <end position="271"/>
    </location>
</feature>
<feature type="compositionally biased region" description="Low complexity" evidence="1">
    <location>
        <begin position="272"/>
        <end position="283"/>
    </location>
</feature>
<feature type="compositionally biased region" description="Gly residues" evidence="1">
    <location>
        <begin position="284"/>
        <end position="307"/>
    </location>
</feature>
<feature type="compositionally biased region" description="Low complexity" evidence="1">
    <location>
        <begin position="308"/>
        <end position="319"/>
    </location>
</feature>
<feature type="compositionally biased region" description="Gly residues" evidence="1">
    <location>
        <begin position="320"/>
        <end position="349"/>
    </location>
</feature>
<feature type="compositionally biased region" description="Low complexity" evidence="1">
    <location>
        <begin position="350"/>
        <end position="361"/>
    </location>
</feature>
<feature type="compositionally biased region" description="Gly residues" evidence="1">
    <location>
        <begin position="362"/>
        <end position="378"/>
    </location>
</feature>
<feature type="compositionally biased region" description="Low complexity" evidence="1">
    <location>
        <begin position="379"/>
        <end position="391"/>
    </location>
</feature>
<feature type="compositionally biased region" description="Gly residues" evidence="1">
    <location>
        <begin position="392"/>
        <end position="415"/>
    </location>
</feature>
<feature type="compositionally biased region" description="Low complexity" evidence="1">
    <location>
        <begin position="416"/>
        <end position="428"/>
    </location>
</feature>
<feature type="compositionally biased region" description="Gly residues" evidence="1">
    <location>
        <begin position="429"/>
        <end position="452"/>
    </location>
</feature>
<feature type="compositionally biased region" description="Low complexity" evidence="1">
    <location>
        <begin position="453"/>
        <end position="464"/>
    </location>
</feature>
<feature type="compositionally biased region" description="Low complexity" evidence="1">
    <location>
        <begin position="471"/>
        <end position="488"/>
    </location>
</feature>
<feature type="compositionally biased region" description="Low complexity" evidence="1">
    <location>
        <begin position="495"/>
        <end position="508"/>
    </location>
</feature>
<feature type="non-terminal residue">
    <location>
        <position position="1"/>
    </location>
</feature>